<gene>
    <name evidence="1" type="primary">purL</name>
    <name type="ordered locus">XF_1423</name>
</gene>
<feature type="chain" id="PRO_0000100426" description="Phosphoribosylformylglycinamidine synthase">
    <location>
        <begin position="1"/>
        <end position="1322"/>
    </location>
</feature>
<feature type="domain" description="Glutamine amidotransferase type-1" evidence="1">
    <location>
        <begin position="1073"/>
        <end position="1322"/>
    </location>
</feature>
<feature type="region of interest" description="Disordered" evidence="2">
    <location>
        <begin position="593"/>
        <end position="613"/>
    </location>
</feature>
<feature type="compositionally biased region" description="Polar residues" evidence="2">
    <location>
        <begin position="593"/>
        <end position="608"/>
    </location>
</feature>
<feature type="active site" description="Nucleophile" evidence="1">
    <location>
        <position position="1166"/>
    </location>
</feature>
<feature type="active site" evidence="1">
    <location>
        <position position="1287"/>
    </location>
</feature>
<feature type="active site" evidence="1">
    <location>
        <position position="1289"/>
    </location>
</feature>
<feature type="binding site" evidence="1">
    <location>
        <begin position="300"/>
        <end position="311"/>
    </location>
    <ligand>
        <name>ATP</name>
        <dbReference type="ChEBI" id="CHEBI:30616"/>
    </ligand>
</feature>
<feature type="binding site" evidence="1">
    <location>
        <position position="702"/>
    </location>
    <ligand>
        <name>ATP</name>
        <dbReference type="ChEBI" id="CHEBI:30616"/>
    </ligand>
</feature>
<feature type="binding site" evidence="1">
    <location>
        <position position="703"/>
    </location>
    <ligand>
        <name>Mg(2+)</name>
        <dbReference type="ChEBI" id="CHEBI:18420"/>
    </ligand>
</feature>
<feature type="binding site" evidence="1">
    <location>
        <position position="742"/>
    </location>
    <ligand>
        <name>Mg(2+)</name>
        <dbReference type="ChEBI" id="CHEBI:18420"/>
    </ligand>
</feature>
<feature type="binding site" evidence="1">
    <location>
        <position position="746"/>
    </location>
    <ligand>
        <name>Mg(2+)</name>
        <dbReference type="ChEBI" id="CHEBI:18420"/>
    </ligand>
</feature>
<feature type="binding site" evidence="1">
    <location>
        <position position="915"/>
    </location>
    <ligand>
        <name>Mg(2+)</name>
        <dbReference type="ChEBI" id="CHEBI:18420"/>
    </ligand>
</feature>
<feature type="binding site" evidence="1">
    <location>
        <position position="917"/>
    </location>
    <ligand>
        <name>ATP</name>
        <dbReference type="ChEBI" id="CHEBI:30616"/>
    </ligand>
</feature>
<protein>
    <recommendedName>
        <fullName evidence="1">Phosphoribosylformylglycinamidine synthase</fullName>
        <shortName evidence="1">FGAM synthase</shortName>
        <shortName evidence="1">FGAMS</shortName>
        <ecNumber evidence="1">6.3.5.3</ecNumber>
    </recommendedName>
    <alternativeName>
        <fullName evidence="1">Formylglycinamide ribonucleotide amidotransferase</fullName>
        <shortName evidence="1">FGAR amidotransferase</shortName>
        <shortName evidence="1">FGAR-AT</shortName>
    </alternativeName>
</protein>
<reference key="1">
    <citation type="journal article" date="2000" name="Nature">
        <title>The genome sequence of the plant pathogen Xylella fastidiosa.</title>
        <authorList>
            <person name="Simpson A.J.G."/>
            <person name="Reinach F.C."/>
            <person name="Arruda P."/>
            <person name="Abreu F.A."/>
            <person name="Acencio M."/>
            <person name="Alvarenga R."/>
            <person name="Alves L.M.C."/>
            <person name="Araya J.E."/>
            <person name="Baia G.S."/>
            <person name="Baptista C.S."/>
            <person name="Barros M.H."/>
            <person name="Bonaccorsi E.D."/>
            <person name="Bordin S."/>
            <person name="Bove J.M."/>
            <person name="Briones M.R.S."/>
            <person name="Bueno M.R.P."/>
            <person name="Camargo A.A."/>
            <person name="Camargo L.E.A."/>
            <person name="Carraro D.M."/>
            <person name="Carrer H."/>
            <person name="Colauto N.B."/>
            <person name="Colombo C."/>
            <person name="Costa F.F."/>
            <person name="Costa M.C.R."/>
            <person name="Costa-Neto C.M."/>
            <person name="Coutinho L.L."/>
            <person name="Cristofani M."/>
            <person name="Dias-Neto E."/>
            <person name="Docena C."/>
            <person name="El-Dorry H."/>
            <person name="Facincani A.P."/>
            <person name="Ferreira A.J.S."/>
            <person name="Ferreira V.C.A."/>
            <person name="Ferro J.A."/>
            <person name="Fraga J.S."/>
            <person name="Franca S.C."/>
            <person name="Franco M.C."/>
            <person name="Frohme M."/>
            <person name="Furlan L.R."/>
            <person name="Garnier M."/>
            <person name="Goldman G.H."/>
            <person name="Goldman M.H.S."/>
            <person name="Gomes S.L."/>
            <person name="Gruber A."/>
            <person name="Ho P.L."/>
            <person name="Hoheisel J.D."/>
            <person name="Junqueira M.L."/>
            <person name="Kemper E.L."/>
            <person name="Kitajima J.P."/>
            <person name="Krieger J.E."/>
            <person name="Kuramae E.E."/>
            <person name="Laigret F."/>
            <person name="Lambais M.R."/>
            <person name="Leite L.C.C."/>
            <person name="Lemos E.G.M."/>
            <person name="Lemos M.V.F."/>
            <person name="Lopes S.A."/>
            <person name="Lopes C.R."/>
            <person name="Machado J.A."/>
            <person name="Machado M.A."/>
            <person name="Madeira A.M.B.N."/>
            <person name="Madeira H.M.F."/>
            <person name="Marino C.L."/>
            <person name="Marques M.V."/>
            <person name="Martins E.A.L."/>
            <person name="Martins E.M.F."/>
            <person name="Matsukuma A.Y."/>
            <person name="Menck C.F.M."/>
            <person name="Miracca E.C."/>
            <person name="Miyaki C.Y."/>
            <person name="Monteiro-Vitorello C.B."/>
            <person name="Moon D.H."/>
            <person name="Nagai M.A."/>
            <person name="Nascimento A.L.T.O."/>
            <person name="Netto L.E.S."/>
            <person name="Nhani A. Jr."/>
            <person name="Nobrega F.G."/>
            <person name="Nunes L.R."/>
            <person name="Oliveira M.A."/>
            <person name="de Oliveira M.C."/>
            <person name="de Oliveira R.C."/>
            <person name="Palmieri D.A."/>
            <person name="Paris A."/>
            <person name="Peixoto B.R."/>
            <person name="Pereira G.A.G."/>
            <person name="Pereira H.A. Jr."/>
            <person name="Pesquero J.B."/>
            <person name="Quaggio R.B."/>
            <person name="Roberto P.G."/>
            <person name="Rodrigues V."/>
            <person name="de Rosa A.J.M."/>
            <person name="de Rosa V.E. Jr."/>
            <person name="de Sa R.G."/>
            <person name="Santelli R.V."/>
            <person name="Sawasaki H.E."/>
            <person name="da Silva A.C.R."/>
            <person name="da Silva A.M."/>
            <person name="da Silva F.R."/>
            <person name="Silva W.A. Jr."/>
            <person name="da Silveira J.F."/>
            <person name="Silvestri M.L.Z."/>
            <person name="Siqueira W.J."/>
            <person name="de Souza A.A."/>
            <person name="de Souza A.P."/>
            <person name="Terenzi M.F."/>
            <person name="Truffi D."/>
            <person name="Tsai S.M."/>
            <person name="Tsuhako M.H."/>
            <person name="Vallada H."/>
            <person name="Van Sluys M.A."/>
            <person name="Verjovski-Almeida S."/>
            <person name="Vettore A.L."/>
            <person name="Zago M.A."/>
            <person name="Zatz M."/>
            <person name="Meidanis J."/>
            <person name="Setubal J.C."/>
        </authorList>
    </citation>
    <scope>NUCLEOTIDE SEQUENCE [LARGE SCALE GENOMIC DNA]</scope>
    <source>
        <strain>9a5c</strain>
    </source>
</reference>
<keyword id="KW-0067">ATP-binding</keyword>
<keyword id="KW-0963">Cytoplasm</keyword>
<keyword id="KW-0315">Glutamine amidotransferase</keyword>
<keyword id="KW-0436">Ligase</keyword>
<keyword id="KW-0460">Magnesium</keyword>
<keyword id="KW-0479">Metal-binding</keyword>
<keyword id="KW-0547">Nucleotide-binding</keyword>
<keyword id="KW-0658">Purine biosynthesis</keyword>
<dbReference type="EC" id="6.3.5.3" evidence="1"/>
<dbReference type="EMBL" id="AE003849">
    <property type="protein sequence ID" value="AAF84232.1"/>
    <property type="molecule type" value="Genomic_DNA"/>
</dbReference>
<dbReference type="PIR" id="D82685">
    <property type="entry name" value="D82685"/>
</dbReference>
<dbReference type="RefSeq" id="WP_010893924.1">
    <property type="nucleotide sequence ID" value="NC_002488.3"/>
</dbReference>
<dbReference type="SMR" id="Q9PDF6"/>
<dbReference type="STRING" id="160492.XF_1423"/>
<dbReference type="KEGG" id="xfa:XF_1423"/>
<dbReference type="PATRIC" id="fig|160492.11.peg.1502"/>
<dbReference type="eggNOG" id="COG0046">
    <property type="taxonomic scope" value="Bacteria"/>
</dbReference>
<dbReference type="eggNOG" id="COG0047">
    <property type="taxonomic scope" value="Bacteria"/>
</dbReference>
<dbReference type="HOGENOM" id="CLU_001031_0_2_6"/>
<dbReference type="UniPathway" id="UPA00074">
    <property type="reaction ID" value="UER00128"/>
</dbReference>
<dbReference type="Proteomes" id="UP000000812">
    <property type="component" value="Chromosome"/>
</dbReference>
<dbReference type="GO" id="GO:0005737">
    <property type="term" value="C:cytoplasm"/>
    <property type="evidence" value="ECO:0007669"/>
    <property type="project" value="UniProtKB-SubCell"/>
</dbReference>
<dbReference type="GO" id="GO:0005524">
    <property type="term" value="F:ATP binding"/>
    <property type="evidence" value="ECO:0007669"/>
    <property type="project" value="UniProtKB-UniRule"/>
</dbReference>
<dbReference type="GO" id="GO:0046872">
    <property type="term" value="F:metal ion binding"/>
    <property type="evidence" value="ECO:0007669"/>
    <property type="project" value="UniProtKB-KW"/>
</dbReference>
<dbReference type="GO" id="GO:0004642">
    <property type="term" value="F:phosphoribosylformylglycinamidine synthase activity"/>
    <property type="evidence" value="ECO:0007669"/>
    <property type="project" value="UniProtKB-UniRule"/>
</dbReference>
<dbReference type="GO" id="GO:0006189">
    <property type="term" value="P:'de novo' IMP biosynthetic process"/>
    <property type="evidence" value="ECO:0007669"/>
    <property type="project" value="UniProtKB-UniRule"/>
</dbReference>
<dbReference type="CDD" id="cd01740">
    <property type="entry name" value="GATase1_FGAR_AT"/>
    <property type="match status" value="1"/>
</dbReference>
<dbReference type="CDD" id="cd02203">
    <property type="entry name" value="PurL_repeat1"/>
    <property type="match status" value="1"/>
</dbReference>
<dbReference type="CDD" id="cd02204">
    <property type="entry name" value="PurL_repeat2"/>
    <property type="match status" value="1"/>
</dbReference>
<dbReference type="FunFam" id="3.30.1330.10:FF:000005">
    <property type="entry name" value="Phosphoribosylformylglycinamidine synthase"/>
    <property type="match status" value="1"/>
</dbReference>
<dbReference type="FunFam" id="3.40.50.880:FF:000008">
    <property type="entry name" value="Phosphoribosylformylglycinamidine synthase"/>
    <property type="match status" value="1"/>
</dbReference>
<dbReference type="FunFam" id="3.90.650.10:FF:000024">
    <property type="entry name" value="Phosphoribosylformylglycinamidine synthase"/>
    <property type="match status" value="1"/>
</dbReference>
<dbReference type="Gene3D" id="3.40.50.880">
    <property type="match status" value="1"/>
</dbReference>
<dbReference type="Gene3D" id="1.10.8.750">
    <property type="entry name" value="Phosphoribosylformylglycinamidine synthase, linker domain"/>
    <property type="match status" value="1"/>
</dbReference>
<dbReference type="Gene3D" id="3.90.650.10">
    <property type="entry name" value="PurM-like C-terminal domain"/>
    <property type="match status" value="2"/>
</dbReference>
<dbReference type="Gene3D" id="3.30.1330.10">
    <property type="entry name" value="PurM-like, N-terminal domain"/>
    <property type="match status" value="2"/>
</dbReference>
<dbReference type="HAMAP" id="MF_00419">
    <property type="entry name" value="PurL_1"/>
    <property type="match status" value="1"/>
</dbReference>
<dbReference type="InterPro" id="IPR029062">
    <property type="entry name" value="Class_I_gatase-like"/>
</dbReference>
<dbReference type="InterPro" id="IPR040707">
    <property type="entry name" value="FGAR-AT_N"/>
</dbReference>
<dbReference type="InterPro" id="IPR055181">
    <property type="entry name" value="FGAR-AT_PurM_N-like"/>
</dbReference>
<dbReference type="InterPro" id="IPR010073">
    <property type="entry name" value="PurL_large"/>
</dbReference>
<dbReference type="InterPro" id="IPR041609">
    <property type="entry name" value="PurL_linker"/>
</dbReference>
<dbReference type="InterPro" id="IPR010918">
    <property type="entry name" value="PurM-like_C_dom"/>
</dbReference>
<dbReference type="InterPro" id="IPR036676">
    <property type="entry name" value="PurM-like_C_sf"/>
</dbReference>
<dbReference type="InterPro" id="IPR036921">
    <property type="entry name" value="PurM-like_N_sf"/>
</dbReference>
<dbReference type="InterPro" id="IPR036604">
    <property type="entry name" value="PurS-like_sf"/>
</dbReference>
<dbReference type="NCBIfam" id="TIGR01735">
    <property type="entry name" value="FGAM_synt"/>
    <property type="match status" value="1"/>
</dbReference>
<dbReference type="NCBIfam" id="NF003672">
    <property type="entry name" value="PRK05297.1"/>
    <property type="match status" value="1"/>
</dbReference>
<dbReference type="PANTHER" id="PTHR10099">
    <property type="entry name" value="PHOSPHORIBOSYLFORMYLGLYCINAMIDINE SYNTHASE"/>
    <property type="match status" value="1"/>
</dbReference>
<dbReference type="PANTHER" id="PTHR10099:SF1">
    <property type="entry name" value="PHOSPHORIBOSYLFORMYLGLYCINAMIDINE SYNTHASE"/>
    <property type="match status" value="1"/>
</dbReference>
<dbReference type="Pfam" id="PF02769">
    <property type="entry name" value="AIRS_C"/>
    <property type="match status" value="2"/>
</dbReference>
<dbReference type="Pfam" id="PF18072">
    <property type="entry name" value="FGAR-AT_linker"/>
    <property type="match status" value="1"/>
</dbReference>
<dbReference type="Pfam" id="PF18076">
    <property type="entry name" value="FGAR-AT_N"/>
    <property type="match status" value="1"/>
</dbReference>
<dbReference type="Pfam" id="PF22689">
    <property type="entry name" value="FGAR-AT_PurM_N-like"/>
    <property type="match status" value="1"/>
</dbReference>
<dbReference type="Pfam" id="PF13507">
    <property type="entry name" value="GATase_5"/>
    <property type="match status" value="1"/>
</dbReference>
<dbReference type="SMART" id="SM01211">
    <property type="entry name" value="GATase_5"/>
    <property type="match status" value="1"/>
</dbReference>
<dbReference type="SUPFAM" id="SSF52317">
    <property type="entry name" value="Class I glutamine amidotransferase-like"/>
    <property type="match status" value="1"/>
</dbReference>
<dbReference type="SUPFAM" id="SSF109736">
    <property type="entry name" value="FGAM synthase PurL, linker domain"/>
    <property type="match status" value="1"/>
</dbReference>
<dbReference type="SUPFAM" id="SSF56042">
    <property type="entry name" value="PurM C-terminal domain-like"/>
    <property type="match status" value="2"/>
</dbReference>
<dbReference type="SUPFAM" id="SSF55326">
    <property type="entry name" value="PurM N-terminal domain-like"/>
    <property type="match status" value="2"/>
</dbReference>
<dbReference type="SUPFAM" id="SSF82697">
    <property type="entry name" value="PurS-like"/>
    <property type="match status" value="1"/>
</dbReference>
<dbReference type="PROSITE" id="PS51273">
    <property type="entry name" value="GATASE_TYPE_1"/>
    <property type="match status" value="1"/>
</dbReference>
<accession>Q9PDF6</accession>
<comment type="function">
    <text evidence="1">Phosphoribosylformylglycinamidine synthase involved in the purines biosynthetic pathway. Catalyzes the ATP-dependent conversion of formylglycinamide ribonucleotide (FGAR) and glutamine to yield formylglycinamidine ribonucleotide (FGAM) and glutamate.</text>
</comment>
<comment type="catalytic activity">
    <reaction evidence="1">
        <text>N(2)-formyl-N(1)-(5-phospho-beta-D-ribosyl)glycinamide + L-glutamine + ATP + H2O = 2-formamido-N(1)-(5-O-phospho-beta-D-ribosyl)acetamidine + L-glutamate + ADP + phosphate + H(+)</text>
        <dbReference type="Rhea" id="RHEA:17129"/>
        <dbReference type="ChEBI" id="CHEBI:15377"/>
        <dbReference type="ChEBI" id="CHEBI:15378"/>
        <dbReference type="ChEBI" id="CHEBI:29985"/>
        <dbReference type="ChEBI" id="CHEBI:30616"/>
        <dbReference type="ChEBI" id="CHEBI:43474"/>
        <dbReference type="ChEBI" id="CHEBI:58359"/>
        <dbReference type="ChEBI" id="CHEBI:147286"/>
        <dbReference type="ChEBI" id="CHEBI:147287"/>
        <dbReference type="ChEBI" id="CHEBI:456216"/>
        <dbReference type="EC" id="6.3.5.3"/>
    </reaction>
</comment>
<comment type="pathway">
    <text evidence="1">Purine metabolism; IMP biosynthesis via de novo pathway; 5-amino-1-(5-phospho-D-ribosyl)imidazole from N(2)-formyl-N(1)-(5-phospho-D-ribosyl)glycinamide: step 1/2.</text>
</comment>
<comment type="subunit">
    <text evidence="1">Monomer.</text>
</comment>
<comment type="subcellular location">
    <subcellularLocation>
        <location evidence="1">Cytoplasm</location>
    </subcellularLocation>
</comment>
<comment type="similarity">
    <text evidence="1">In the N-terminal section; belongs to the FGAMS family.</text>
</comment>
<sequence>MIVLKGASALSPFRLARFESRLQTTVPELHIVGAWHCYLIQIKSGHTLDMSALHRILQAESVSEPPQEHVVSRYVMPRLGTHSPWSSKTTELLHGAGQPIARIERGTRIDLLGWSANAATCPAIAKQLYDPMTQSLLESEDEVKTLFNVPEPLSLERIALIDLEHANTRWGLALTADEIDYLRTRYTELNRVPSDVELMMFAQANSEHCRHKIFNATWTINDKEQQHSLFQMIKHTHQHTPQYTLSAYADNAAVIEGHPTARYRPDPITGEYRHEAVLPGAFQIKVETHNHPTAIAPFPGASTGAGGEIRDEGATGRGGKPKAGLSGFSVSHLRIPTLPHPWETPRALNPRMASALDIMLEGPLGSAAFNNEFGRPNLLGYFRSFELSASKTLTRAYDKPIMLAGGLGAIDRIHIKKLRLQPGDVIIVLGGPAMLIGLGGGAASSVTSGTSTEALDFASVQRDNPEMQRRCQEVIDHCVALGTNNPIRSFHDVGAGGLSNAIPELLHDSEVGGVIDLAKIPSDDPSLSPLELWCNESQERYVLGISAAHLQAFAAICTRERCPFAAVGVATATEQLIVGYGVTLPAALHVTEQQTPQRANHTETSPTPNTLPPSVREAFAIDLPMDVLFGKAPKMHRNTAHPPPPHWPTLDSTQLDLHHAGLRVLAHPTVAAKNFLVTIGDRSIGGLTAREQMIGPWQLPLADCAITLAGFGTYAGEAFAIGERAPLALLNSAAAARMAVGEAITNLCAAPVESLSMVKLSANWMAAAEHPGEDALLYDAVKAIGIELCPALDISIPVGKDSLSMQSRWQADGATHTCISPVSLVISAFTPVADARRQLTPLLHHQTNSELWLIALDGGKQRLGGSVLAQVHADSAALPTFGGECPDLDTPETLRAFFALMNDARNAGLLLAYHDRSDGGAFAALCEMAFASHLGLDITCDNRTEHLFPHLFNEELGAIVQVADEHRTAFTDLVEQHGLTAYTQRIAHPTTAPSIRIMHNDQCLAQWTWETLFDAWWSVTHAMQRLRDNPECADEEREIARTFTAPGLKPTLSFDPAVDVAMPFIATGIRPTVAILREQGINGHIEMALCFERAGFHCVDIHMNDLITGRVHLDEFVGLAACGGFSYGDVLGAGRGWATSILERTALRDQFAAFFTRTDRFALGVCNGCQMLSQLKSMIPGAEHWPRFVRNRSEQFEARTALLEVIQSPSIFLSGMAGSRLPVAVAHGEGYAMFDTPADQAAAHVALRYINGHGQAATHYPLNPNGSPNGITGLTTTDGRITILMPHPERTPRTINLSWSPNEWGEDTPWLRLFRNARAWVG</sequence>
<organism>
    <name type="scientific">Xylella fastidiosa (strain 9a5c)</name>
    <dbReference type="NCBI Taxonomy" id="160492"/>
    <lineage>
        <taxon>Bacteria</taxon>
        <taxon>Pseudomonadati</taxon>
        <taxon>Pseudomonadota</taxon>
        <taxon>Gammaproteobacteria</taxon>
        <taxon>Lysobacterales</taxon>
        <taxon>Lysobacteraceae</taxon>
        <taxon>Xylella</taxon>
    </lineage>
</organism>
<name>PUR4_XYLFA</name>
<evidence type="ECO:0000255" key="1">
    <source>
        <dbReference type="HAMAP-Rule" id="MF_00419"/>
    </source>
</evidence>
<evidence type="ECO:0000256" key="2">
    <source>
        <dbReference type="SAM" id="MobiDB-lite"/>
    </source>
</evidence>
<proteinExistence type="inferred from homology"/>